<keyword id="KW-0030">Aminoacyl-tRNA synthetase</keyword>
<keyword id="KW-0067">ATP-binding</keyword>
<keyword id="KW-0963">Cytoplasm</keyword>
<keyword id="KW-0436">Ligase</keyword>
<keyword id="KW-0547">Nucleotide-binding</keyword>
<keyword id="KW-0648">Protein biosynthesis</keyword>
<protein>
    <recommendedName>
        <fullName evidence="1">Serine--tRNA ligase</fullName>
        <ecNumber evidence="1">6.1.1.11</ecNumber>
    </recommendedName>
    <alternativeName>
        <fullName evidence="1">Seryl-tRNA synthetase</fullName>
        <shortName evidence="1">SerRS</shortName>
    </alternativeName>
    <alternativeName>
        <fullName evidence="1">Seryl-tRNA(Ser/Sec) synthetase</fullName>
    </alternativeName>
</protein>
<feature type="chain" id="PRO_1000199508" description="Serine--tRNA ligase">
    <location>
        <begin position="1"/>
        <end position="424"/>
    </location>
</feature>
<feature type="binding site" evidence="1">
    <location>
        <begin position="230"/>
        <end position="232"/>
    </location>
    <ligand>
        <name>L-serine</name>
        <dbReference type="ChEBI" id="CHEBI:33384"/>
    </ligand>
</feature>
<feature type="binding site" evidence="1">
    <location>
        <begin position="261"/>
        <end position="263"/>
    </location>
    <ligand>
        <name>ATP</name>
        <dbReference type="ChEBI" id="CHEBI:30616"/>
    </ligand>
</feature>
<feature type="binding site" evidence="1">
    <location>
        <position position="284"/>
    </location>
    <ligand>
        <name>L-serine</name>
        <dbReference type="ChEBI" id="CHEBI:33384"/>
    </ligand>
</feature>
<feature type="binding site" evidence="1">
    <location>
        <begin position="348"/>
        <end position="351"/>
    </location>
    <ligand>
        <name>ATP</name>
        <dbReference type="ChEBI" id="CHEBI:30616"/>
    </ligand>
</feature>
<feature type="binding site" evidence="1">
    <location>
        <position position="384"/>
    </location>
    <ligand>
        <name>L-serine</name>
        <dbReference type="ChEBI" id="CHEBI:33384"/>
    </ligand>
</feature>
<comment type="function">
    <text evidence="1">Catalyzes the attachment of serine to tRNA(Ser). Is also able to aminoacylate tRNA(Sec) with serine, to form the misacylated tRNA L-seryl-tRNA(Sec), which will be further converted into selenocysteinyl-tRNA(Sec).</text>
</comment>
<comment type="catalytic activity">
    <reaction evidence="1">
        <text>tRNA(Ser) + L-serine + ATP = L-seryl-tRNA(Ser) + AMP + diphosphate + H(+)</text>
        <dbReference type="Rhea" id="RHEA:12292"/>
        <dbReference type="Rhea" id="RHEA-COMP:9669"/>
        <dbReference type="Rhea" id="RHEA-COMP:9703"/>
        <dbReference type="ChEBI" id="CHEBI:15378"/>
        <dbReference type="ChEBI" id="CHEBI:30616"/>
        <dbReference type="ChEBI" id="CHEBI:33019"/>
        <dbReference type="ChEBI" id="CHEBI:33384"/>
        <dbReference type="ChEBI" id="CHEBI:78442"/>
        <dbReference type="ChEBI" id="CHEBI:78533"/>
        <dbReference type="ChEBI" id="CHEBI:456215"/>
        <dbReference type="EC" id="6.1.1.11"/>
    </reaction>
</comment>
<comment type="catalytic activity">
    <reaction evidence="1">
        <text>tRNA(Sec) + L-serine + ATP = L-seryl-tRNA(Sec) + AMP + diphosphate + H(+)</text>
        <dbReference type="Rhea" id="RHEA:42580"/>
        <dbReference type="Rhea" id="RHEA-COMP:9742"/>
        <dbReference type="Rhea" id="RHEA-COMP:10128"/>
        <dbReference type="ChEBI" id="CHEBI:15378"/>
        <dbReference type="ChEBI" id="CHEBI:30616"/>
        <dbReference type="ChEBI" id="CHEBI:33019"/>
        <dbReference type="ChEBI" id="CHEBI:33384"/>
        <dbReference type="ChEBI" id="CHEBI:78442"/>
        <dbReference type="ChEBI" id="CHEBI:78533"/>
        <dbReference type="ChEBI" id="CHEBI:456215"/>
        <dbReference type="EC" id="6.1.1.11"/>
    </reaction>
</comment>
<comment type="pathway">
    <text evidence="1">Aminoacyl-tRNA biosynthesis; selenocysteinyl-tRNA(Sec) biosynthesis; L-seryl-tRNA(Sec) from L-serine and tRNA(Sec): step 1/1.</text>
</comment>
<comment type="subunit">
    <text evidence="1">Homodimer. The tRNA molecule binds across the dimer.</text>
</comment>
<comment type="subcellular location">
    <subcellularLocation>
        <location evidence="1">Cytoplasm</location>
    </subcellularLocation>
</comment>
<comment type="domain">
    <text evidence="1">Consists of two distinct domains, a catalytic core and a N-terminal extension that is involved in tRNA binding.</text>
</comment>
<comment type="similarity">
    <text evidence="1">Belongs to the class-II aminoacyl-tRNA synthetase family. Type-1 seryl-tRNA synthetase subfamily.</text>
</comment>
<dbReference type="EC" id="6.1.1.11" evidence="1"/>
<dbReference type="EMBL" id="CP000919">
    <property type="protein sequence ID" value="ACO19141.1"/>
    <property type="molecule type" value="Genomic_DNA"/>
</dbReference>
<dbReference type="RefSeq" id="WP_000884260.1">
    <property type="nucleotide sequence ID" value="NC_012466.1"/>
</dbReference>
<dbReference type="SMR" id="C1CCH7"/>
<dbReference type="KEGG" id="sjj:SPJ_0398"/>
<dbReference type="HOGENOM" id="CLU_023797_1_1_9"/>
<dbReference type="UniPathway" id="UPA00906">
    <property type="reaction ID" value="UER00895"/>
</dbReference>
<dbReference type="Proteomes" id="UP000002206">
    <property type="component" value="Chromosome"/>
</dbReference>
<dbReference type="GO" id="GO:0005737">
    <property type="term" value="C:cytoplasm"/>
    <property type="evidence" value="ECO:0007669"/>
    <property type="project" value="UniProtKB-SubCell"/>
</dbReference>
<dbReference type="GO" id="GO:0005524">
    <property type="term" value="F:ATP binding"/>
    <property type="evidence" value="ECO:0007669"/>
    <property type="project" value="UniProtKB-UniRule"/>
</dbReference>
<dbReference type="GO" id="GO:0140096">
    <property type="term" value="F:catalytic activity, acting on a protein"/>
    <property type="evidence" value="ECO:0007669"/>
    <property type="project" value="UniProtKB-ARBA"/>
</dbReference>
<dbReference type="GO" id="GO:0004828">
    <property type="term" value="F:serine-tRNA ligase activity"/>
    <property type="evidence" value="ECO:0007669"/>
    <property type="project" value="UniProtKB-UniRule"/>
</dbReference>
<dbReference type="GO" id="GO:0016740">
    <property type="term" value="F:transferase activity"/>
    <property type="evidence" value="ECO:0007669"/>
    <property type="project" value="UniProtKB-ARBA"/>
</dbReference>
<dbReference type="GO" id="GO:0016260">
    <property type="term" value="P:selenocysteine biosynthetic process"/>
    <property type="evidence" value="ECO:0007669"/>
    <property type="project" value="UniProtKB-UniRule"/>
</dbReference>
<dbReference type="GO" id="GO:0006434">
    <property type="term" value="P:seryl-tRNA aminoacylation"/>
    <property type="evidence" value="ECO:0007669"/>
    <property type="project" value="UniProtKB-UniRule"/>
</dbReference>
<dbReference type="CDD" id="cd00770">
    <property type="entry name" value="SerRS_core"/>
    <property type="match status" value="1"/>
</dbReference>
<dbReference type="Gene3D" id="3.30.930.10">
    <property type="entry name" value="Bira Bifunctional Protein, Domain 2"/>
    <property type="match status" value="1"/>
</dbReference>
<dbReference type="Gene3D" id="1.10.287.40">
    <property type="entry name" value="Serine-tRNA synthetase, tRNA binding domain"/>
    <property type="match status" value="1"/>
</dbReference>
<dbReference type="HAMAP" id="MF_00176">
    <property type="entry name" value="Ser_tRNA_synth_type1"/>
    <property type="match status" value="1"/>
</dbReference>
<dbReference type="InterPro" id="IPR002314">
    <property type="entry name" value="aa-tRNA-synt_IIb"/>
</dbReference>
<dbReference type="InterPro" id="IPR006195">
    <property type="entry name" value="aa-tRNA-synth_II"/>
</dbReference>
<dbReference type="InterPro" id="IPR045864">
    <property type="entry name" value="aa-tRNA-synth_II/BPL/LPL"/>
</dbReference>
<dbReference type="InterPro" id="IPR002317">
    <property type="entry name" value="Ser-tRNA-ligase_type_1"/>
</dbReference>
<dbReference type="InterPro" id="IPR015866">
    <property type="entry name" value="Ser-tRNA-synth_1_N"/>
</dbReference>
<dbReference type="InterPro" id="IPR042103">
    <property type="entry name" value="SerRS_1_N_sf"/>
</dbReference>
<dbReference type="InterPro" id="IPR033729">
    <property type="entry name" value="SerRS_core"/>
</dbReference>
<dbReference type="InterPro" id="IPR010978">
    <property type="entry name" value="tRNA-bd_arm"/>
</dbReference>
<dbReference type="NCBIfam" id="TIGR00414">
    <property type="entry name" value="serS"/>
    <property type="match status" value="1"/>
</dbReference>
<dbReference type="PANTHER" id="PTHR43697:SF1">
    <property type="entry name" value="SERINE--TRNA LIGASE"/>
    <property type="match status" value="1"/>
</dbReference>
<dbReference type="PANTHER" id="PTHR43697">
    <property type="entry name" value="SERYL-TRNA SYNTHETASE"/>
    <property type="match status" value="1"/>
</dbReference>
<dbReference type="Pfam" id="PF02403">
    <property type="entry name" value="Seryl_tRNA_N"/>
    <property type="match status" value="1"/>
</dbReference>
<dbReference type="Pfam" id="PF00587">
    <property type="entry name" value="tRNA-synt_2b"/>
    <property type="match status" value="1"/>
</dbReference>
<dbReference type="PIRSF" id="PIRSF001529">
    <property type="entry name" value="Ser-tRNA-synth_IIa"/>
    <property type="match status" value="1"/>
</dbReference>
<dbReference type="PRINTS" id="PR00981">
    <property type="entry name" value="TRNASYNTHSER"/>
</dbReference>
<dbReference type="SUPFAM" id="SSF55681">
    <property type="entry name" value="Class II aaRS and biotin synthetases"/>
    <property type="match status" value="1"/>
</dbReference>
<dbReference type="SUPFAM" id="SSF46589">
    <property type="entry name" value="tRNA-binding arm"/>
    <property type="match status" value="1"/>
</dbReference>
<dbReference type="PROSITE" id="PS50862">
    <property type="entry name" value="AA_TRNA_LIGASE_II"/>
    <property type="match status" value="1"/>
</dbReference>
<organism>
    <name type="scientific">Streptococcus pneumoniae (strain JJA)</name>
    <dbReference type="NCBI Taxonomy" id="488222"/>
    <lineage>
        <taxon>Bacteria</taxon>
        <taxon>Bacillati</taxon>
        <taxon>Bacillota</taxon>
        <taxon>Bacilli</taxon>
        <taxon>Lactobacillales</taxon>
        <taxon>Streptococcaceae</taxon>
        <taxon>Streptococcus</taxon>
    </lineage>
</organism>
<evidence type="ECO:0000255" key="1">
    <source>
        <dbReference type="HAMAP-Rule" id="MF_00176"/>
    </source>
</evidence>
<reference key="1">
    <citation type="journal article" date="2010" name="Genome Biol.">
        <title>Structure and dynamics of the pan-genome of Streptococcus pneumoniae and closely related species.</title>
        <authorList>
            <person name="Donati C."/>
            <person name="Hiller N.L."/>
            <person name="Tettelin H."/>
            <person name="Muzzi A."/>
            <person name="Croucher N.J."/>
            <person name="Angiuoli S.V."/>
            <person name="Oggioni M."/>
            <person name="Dunning Hotopp J.C."/>
            <person name="Hu F.Z."/>
            <person name="Riley D.R."/>
            <person name="Covacci A."/>
            <person name="Mitchell T.J."/>
            <person name="Bentley S.D."/>
            <person name="Kilian M."/>
            <person name="Ehrlich G.D."/>
            <person name="Rappuoli R."/>
            <person name="Moxon E.R."/>
            <person name="Masignani V."/>
        </authorList>
    </citation>
    <scope>NUCLEOTIDE SEQUENCE [LARGE SCALE GENOMIC DNA]</scope>
    <source>
        <strain>JJA</strain>
    </source>
</reference>
<gene>
    <name evidence="1" type="primary">serS</name>
    <name type="ordered locus">SPJ_0398</name>
</gene>
<sequence>MLDIKRIRTDFEAVAEKLATRGVDAAVLNEMKEIDAKRRNILVKVETLKAERNTVSAEIAQAKRNKENTDDKIAAMQNLSAEVKALDAELAEIDAKLTEFTTTLPNIPADSVPVGTDEDDNVEVRRWGTPREFDFEPKAHWDLGEDLGILDWERGGKVTGARFLFYKGLGARLERAIYNFMLDEHGKEGYTEVITPYIVNHDSMFGTGQYPKFKEDTFELSDTNFVLIPTAEVPLTNYYRDEILDGKDLPIYFTAMSPSFRSEAGSAGRDTRGLIRLHQFHKVEMVKFAKPEESYEELEKMTANAENILQKLNLPYRVVALSTGDMGFSTAKTYDLEVWIPAQNNYREISSCSNTEDFQARRAQIRYRDEADGKVKLLHTLNGSGLAVGRTVAAILENYQNEDGSVTIPEALRPYMGGAEVIKP</sequence>
<name>SYS_STRZJ</name>
<proteinExistence type="inferred from homology"/>
<accession>C1CCH7</accession>